<sequence>MKNQYVPVITLDGPSASGKGTIARLVSQALGFHYLDSGALYRLVALAAMKRGVDAGDEQGVVGIARSLDVSFADSSIRLDGIDVSDEIRAEACGEYASKIAQYSALRVELLERQRDLRKLPGLVADGRDMGSVIFPDATLKIYLTANEEERARRRHKQLMEKGINASIAHLVLALRERDERDSKRVASPLQQCEDTRLLDTTGLNIDQVVGKVLGMYADSGSIE</sequence>
<name>KCY_NITEC</name>
<organism>
    <name type="scientific">Nitrosomonas eutropha (strain DSM 101675 / C91 / Nm57)</name>
    <dbReference type="NCBI Taxonomy" id="335283"/>
    <lineage>
        <taxon>Bacteria</taxon>
        <taxon>Pseudomonadati</taxon>
        <taxon>Pseudomonadota</taxon>
        <taxon>Betaproteobacteria</taxon>
        <taxon>Nitrosomonadales</taxon>
        <taxon>Nitrosomonadaceae</taxon>
        <taxon>Nitrosomonas</taxon>
    </lineage>
</organism>
<accession>Q0AIZ4</accession>
<evidence type="ECO:0000255" key="1">
    <source>
        <dbReference type="HAMAP-Rule" id="MF_00238"/>
    </source>
</evidence>
<dbReference type="EC" id="2.7.4.25" evidence="1"/>
<dbReference type="EMBL" id="CP000450">
    <property type="protein sequence ID" value="ABI58677.1"/>
    <property type="molecule type" value="Genomic_DNA"/>
</dbReference>
<dbReference type="RefSeq" id="WP_011633519.1">
    <property type="nucleotide sequence ID" value="NC_008344.1"/>
</dbReference>
<dbReference type="SMR" id="Q0AIZ4"/>
<dbReference type="STRING" id="335283.Neut_0399"/>
<dbReference type="KEGG" id="net:Neut_0399"/>
<dbReference type="eggNOG" id="COG0283">
    <property type="taxonomic scope" value="Bacteria"/>
</dbReference>
<dbReference type="HOGENOM" id="CLU_079959_2_0_4"/>
<dbReference type="OrthoDB" id="9807434at2"/>
<dbReference type="Proteomes" id="UP000001966">
    <property type="component" value="Chromosome"/>
</dbReference>
<dbReference type="GO" id="GO:0005737">
    <property type="term" value="C:cytoplasm"/>
    <property type="evidence" value="ECO:0007669"/>
    <property type="project" value="UniProtKB-SubCell"/>
</dbReference>
<dbReference type="GO" id="GO:0005524">
    <property type="term" value="F:ATP binding"/>
    <property type="evidence" value="ECO:0007669"/>
    <property type="project" value="UniProtKB-UniRule"/>
</dbReference>
<dbReference type="GO" id="GO:0036430">
    <property type="term" value="F:CMP kinase activity"/>
    <property type="evidence" value="ECO:0007669"/>
    <property type="project" value="RHEA"/>
</dbReference>
<dbReference type="GO" id="GO:0036431">
    <property type="term" value="F:dCMP kinase activity"/>
    <property type="evidence" value="ECO:0007669"/>
    <property type="project" value="RHEA"/>
</dbReference>
<dbReference type="GO" id="GO:0006220">
    <property type="term" value="P:pyrimidine nucleotide metabolic process"/>
    <property type="evidence" value="ECO:0007669"/>
    <property type="project" value="UniProtKB-UniRule"/>
</dbReference>
<dbReference type="CDD" id="cd02020">
    <property type="entry name" value="CMPK"/>
    <property type="match status" value="1"/>
</dbReference>
<dbReference type="Gene3D" id="3.40.50.300">
    <property type="entry name" value="P-loop containing nucleotide triphosphate hydrolases"/>
    <property type="match status" value="1"/>
</dbReference>
<dbReference type="HAMAP" id="MF_00238">
    <property type="entry name" value="Cytidyl_kinase_type1"/>
    <property type="match status" value="1"/>
</dbReference>
<dbReference type="InterPro" id="IPR003136">
    <property type="entry name" value="Cytidylate_kin"/>
</dbReference>
<dbReference type="InterPro" id="IPR011994">
    <property type="entry name" value="Cytidylate_kinase_dom"/>
</dbReference>
<dbReference type="InterPro" id="IPR027417">
    <property type="entry name" value="P-loop_NTPase"/>
</dbReference>
<dbReference type="NCBIfam" id="TIGR00017">
    <property type="entry name" value="cmk"/>
    <property type="match status" value="1"/>
</dbReference>
<dbReference type="Pfam" id="PF02224">
    <property type="entry name" value="Cytidylate_kin"/>
    <property type="match status" value="1"/>
</dbReference>
<dbReference type="SUPFAM" id="SSF52540">
    <property type="entry name" value="P-loop containing nucleoside triphosphate hydrolases"/>
    <property type="match status" value="1"/>
</dbReference>
<protein>
    <recommendedName>
        <fullName evidence="1">Cytidylate kinase</fullName>
        <shortName evidence="1">CK</shortName>
        <ecNumber evidence="1">2.7.4.25</ecNumber>
    </recommendedName>
    <alternativeName>
        <fullName evidence="1">Cytidine monophosphate kinase</fullName>
        <shortName evidence="1">CMP kinase</shortName>
    </alternativeName>
</protein>
<comment type="catalytic activity">
    <reaction evidence="1">
        <text>CMP + ATP = CDP + ADP</text>
        <dbReference type="Rhea" id="RHEA:11600"/>
        <dbReference type="ChEBI" id="CHEBI:30616"/>
        <dbReference type="ChEBI" id="CHEBI:58069"/>
        <dbReference type="ChEBI" id="CHEBI:60377"/>
        <dbReference type="ChEBI" id="CHEBI:456216"/>
        <dbReference type="EC" id="2.7.4.25"/>
    </reaction>
</comment>
<comment type="catalytic activity">
    <reaction evidence="1">
        <text>dCMP + ATP = dCDP + ADP</text>
        <dbReference type="Rhea" id="RHEA:25094"/>
        <dbReference type="ChEBI" id="CHEBI:30616"/>
        <dbReference type="ChEBI" id="CHEBI:57566"/>
        <dbReference type="ChEBI" id="CHEBI:58593"/>
        <dbReference type="ChEBI" id="CHEBI:456216"/>
        <dbReference type="EC" id="2.7.4.25"/>
    </reaction>
</comment>
<comment type="subcellular location">
    <subcellularLocation>
        <location evidence="1">Cytoplasm</location>
    </subcellularLocation>
</comment>
<comment type="similarity">
    <text evidence="1">Belongs to the cytidylate kinase family. Type 1 subfamily.</text>
</comment>
<reference key="1">
    <citation type="journal article" date="2007" name="Environ. Microbiol.">
        <title>Whole-genome analysis of the ammonia-oxidizing bacterium, Nitrosomonas eutropha C91: implications for niche adaptation.</title>
        <authorList>
            <person name="Stein L.Y."/>
            <person name="Arp D.J."/>
            <person name="Berube P.M."/>
            <person name="Chain P.S."/>
            <person name="Hauser L."/>
            <person name="Jetten M.S."/>
            <person name="Klotz M.G."/>
            <person name="Larimer F.W."/>
            <person name="Norton J.M."/>
            <person name="Op den Camp H.J.M."/>
            <person name="Shin M."/>
            <person name="Wei X."/>
        </authorList>
    </citation>
    <scope>NUCLEOTIDE SEQUENCE [LARGE SCALE GENOMIC DNA]</scope>
    <source>
        <strain>DSM 101675 / C91 / Nm57</strain>
    </source>
</reference>
<keyword id="KW-0067">ATP-binding</keyword>
<keyword id="KW-0963">Cytoplasm</keyword>
<keyword id="KW-0418">Kinase</keyword>
<keyword id="KW-0547">Nucleotide-binding</keyword>
<keyword id="KW-0808">Transferase</keyword>
<feature type="chain" id="PRO_1000048242" description="Cytidylate kinase">
    <location>
        <begin position="1"/>
        <end position="224"/>
    </location>
</feature>
<feature type="binding site" evidence="1">
    <location>
        <begin position="13"/>
        <end position="21"/>
    </location>
    <ligand>
        <name>ATP</name>
        <dbReference type="ChEBI" id="CHEBI:30616"/>
    </ligand>
</feature>
<gene>
    <name evidence="1" type="primary">cmk</name>
    <name type="ordered locus">Neut_0399</name>
</gene>
<proteinExistence type="inferred from homology"/>